<organism>
    <name type="scientific">Bacillus phage SPbeta</name>
    <name type="common">Bacillus phage SPBc2</name>
    <name type="synonym">Bacteriophage SP-beta</name>
    <dbReference type="NCBI Taxonomy" id="2932878"/>
    <lineage>
        <taxon>Viruses</taxon>
        <taxon>Duplodnaviria</taxon>
        <taxon>Heunggongvirae</taxon>
        <taxon>Uroviricota</taxon>
        <taxon>Caudoviricetes</taxon>
        <taxon>Spbetavirus</taxon>
        <taxon>Spbetavirus SPbeta</taxon>
    </lineage>
</organism>
<gene>
    <name evidence="2" type="primary">sunS</name>
    <name evidence="4" type="synonym">yolJ</name>
</gene>
<evidence type="ECO:0000250" key="1"/>
<evidence type="ECO:0000250" key="2">
    <source>
        <dbReference type="UniProtKB" id="O31986"/>
    </source>
</evidence>
<evidence type="ECO:0000255" key="3"/>
<evidence type="ECO:0000312" key="4">
    <source>
        <dbReference type="EMBL" id="AAC12995.1"/>
    </source>
</evidence>
<keyword id="KW-0328">Glycosyltransferase</keyword>
<keyword id="KW-1185">Reference proteome</keyword>
<keyword id="KW-0808">Transferase</keyword>
<accession>O64036</accession>
<organismHost>
    <name type="scientific">Bacillus pumilus</name>
    <name type="common">Bacillus mesentericus</name>
    <dbReference type="NCBI Taxonomy" id="1408"/>
</organismHost>
<organismHost>
    <name type="scientific">Bacillus subtilis</name>
    <dbReference type="NCBI Taxonomy" id="1423"/>
</organismHost>
<feature type="chain" id="PRO_0000406089" description="Glycosyltransferase SunS">
    <location>
        <begin position="1"/>
        <end position="422"/>
    </location>
</feature>
<dbReference type="EC" id="2.4.1.-"/>
<dbReference type="EMBL" id="AF020713">
    <property type="protein sequence ID" value="AAC12995.1"/>
    <property type="molecule type" value="Genomic_DNA"/>
</dbReference>
<dbReference type="PIR" id="T12786">
    <property type="entry name" value="T12786"/>
</dbReference>
<dbReference type="RefSeq" id="NP_046574.1">
    <property type="nucleotide sequence ID" value="NC_001884.1"/>
</dbReference>
<dbReference type="SMR" id="O64036"/>
<dbReference type="CAZy" id="GT2">
    <property type="family name" value="Glycosyltransferase Family 2"/>
</dbReference>
<dbReference type="GeneID" id="1261366"/>
<dbReference type="KEGG" id="vg:1261366"/>
<dbReference type="Proteomes" id="UP000009091">
    <property type="component" value="Genome"/>
</dbReference>
<dbReference type="GO" id="GO:0016757">
    <property type="term" value="F:glycosyltransferase activity"/>
    <property type="evidence" value="ECO:0007669"/>
    <property type="project" value="UniProtKB-KW"/>
</dbReference>
<dbReference type="GO" id="GO:0030152">
    <property type="term" value="P:bacteriocin biosynthetic process"/>
    <property type="evidence" value="ECO:0000250"/>
    <property type="project" value="UniProtKB"/>
</dbReference>
<dbReference type="GO" id="GO:0018240">
    <property type="term" value="P:protein S-linked glycosylation via cysteine"/>
    <property type="evidence" value="ECO:0000250"/>
    <property type="project" value="UniProtKB"/>
</dbReference>
<dbReference type="Gene3D" id="3.90.550.10">
    <property type="entry name" value="Spore Coat Polysaccharide Biosynthesis Protein SpsA, Chain A"/>
    <property type="match status" value="1"/>
</dbReference>
<dbReference type="Gene3D" id="1.25.40.10">
    <property type="entry name" value="Tetratricopeptide repeat domain"/>
    <property type="match status" value="1"/>
</dbReference>
<dbReference type="InterPro" id="IPR001173">
    <property type="entry name" value="Glyco_trans_2-like"/>
</dbReference>
<dbReference type="InterPro" id="IPR029044">
    <property type="entry name" value="Nucleotide-diphossugar_trans"/>
</dbReference>
<dbReference type="InterPro" id="IPR026499">
    <property type="entry name" value="S_glycosyl_SunS"/>
</dbReference>
<dbReference type="InterPro" id="IPR011990">
    <property type="entry name" value="TPR-like_helical_dom_sf"/>
</dbReference>
<dbReference type="NCBIfam" id="TIGR04195">
    <property type="entry name" value="S_glycosyl_SunS"/>
    <property type="match status" value="1"/>
</dbReference>
<dbReference type="PANTHER" id="PTHR43630:SF2">
    <property type="entry name" value="GLYCOSYLTRANSFERASE"/>
    <property type="match status" value="1"/>
</dbReference>
<dbReference type="PANTHER" id="PTHR43630">
    <property type="entry name" value="POLY-BETA-1,6-N-ACETYL-D-GLUCOSAMINE SYNTHASE"/>
    <property type="match status" value="1"/>
</dbReference>
<dbReference type="Pfam" id="PF00535">
    <property type="entry name" value="Glycos_transf_2"/>
    <property type="match status" value="1"/>
</dbReference>
<dbReference type="SUPFAM" id="SSF53448">
    <property type="entry name" value="Nucleotide-diphospho-sugar transferases"/>
    <property type="match status" value="1"/>
</dbReference>
<dbReference type="SUPFAM" id="SSF48452">
    <property type="entry name" value="TPR-like"/>
    <property type="match status" value="1"/>
</dbReference>
<proteinExistence type="inferred from homology"/>
<comment type="function">
    <text evidence="1">Transfers a hexose moiety onto 'Cys-41' of bacteriocin sublancin-168 (SunA). Accepts UDP-glucose (UDP-Glc), UDP-N-acetylglucosamine (UDP-GlcNAc), UDP-galactose (UDP-Gal), UDP-xylose (UDP-Xyl) and GDP-mannose as substrate (By similarity).</text>
</comment>
<comment type="similarity">
    <text evidence="3">Belongs to the glycosyltransferase 2 family.</text>
</comment>
<reference evidence="4" key="1">
    <citation type="submission" date="1997-08" db="EMBL/GenBank/DDBJ databases">
        <title>The complete nucleotide sequence of the Bacillus subtilis SPbetac2 prophage.</title>
        <authorList>
            <person name="Lazarevic V."/>
            <person name="Duesterhoeft A."/>
            <person name="Soldo B."/>
            <person name="Hilbert H."/>
            <person name="Mauel C."/>
            <person name="Karamata D."/>
        </authorList>
    </citation>
    <scope>NUCLEOTIDE SEQUENCE [GENOMIC DNA]</scope>
</reference>
<sequence>MKLSDIYLELKKGYADSLLYSDLSLLVNIMEYEKDIDVMSIQSLVAGYEKSDTPTITCGIIVYNESKRIKKCLNSVKDDFNEIIVLDSYSTDDTVDIIKCDFPDVEIKYEKWKNDFSYARNKIIEYATSEWIYFIDADNLYSKENKGKIAKVARVLEFFSIDCVVSPYIEEYTGHLYSDTRRMFRLNGKVKFHGKVHEEPMNYNHSLPFNFIVNLKVYHNGYNPSENNIKSKTRRNINLTEEMLRLEPENPKWLFFFGRELHLLDKDEEAIDYLKKSINNYKKFNDQRHFIDALVLLCTLLLQRNNYVDLTLYLDILETEYPRCVDVDYFRSAILLVDMQNKLTSLSNMIDEALTDERYSAINTTKDHFKRILISLNIQLENWERVKEISGEIKNDNMKKEIKQYLANSLHNIEHVLKGIEV</sequence>
<name>SUNS_BPSPB</name>
<protein>
    <recommendedName>
        <fullName>Glycosyltransferase SunS</fullName>
        <ecNumber>2.4.1.-</ecNumber>
    </recommendedName>
</protein>